<sequence>MFMGEYQHNIDIKGRLIVPAKFRELLGDNFVITRGLDKCLFAYPQEEWKKLEEKLQTLPLTKKDARSFTRFFFSGASECELDKQGRINIPSNLLQYADLEKETVIIGVSSRIEIWSKSEWDDVFNEAEESFADLAENMIGFDI</sequence>
<accession>Q71XX1</accession>
<gene>
    <name evidence="1" type="primary">mraZ</name>
    <name type="ordered locus">LMOf2365_2074</name>
</gene>
<dbReference type="EMBL" id="AE017262">
    <property type="protein sequence ID" value="AAT04844.1"/>
    <property type="molecule type" value="Genomic_DNA"/>
</dbReference>
<dbReference type="RefSeq" id="WP_003723756.1">
    <property type="nucleotide sequence ID" value="NC_002973.6"/>
</dbReference>
<dbReference type="SMR" id="Q71XX1"/>
<dbReference type="GeneID" id="93239939"/>
<dbReference type="KEGG" id="lmf:LMOf2365_2074"/>
<dbReference type="HOGENOM" id="CLU_107907_0_5_9"/>
<dbReference type="GO" id="GO:0005737">
    <property type="term" value="C:cytoplasm"/>
    <property type="evidence" value="ECO:0007669"/>
    <property type="project" value="UniProtKB-UniRule"/>
</dbReference>
<dbReference type="GO" id="GO:0009295">
    <property type="term" value="C:nucleoid"/>
    <property type="evidence" value="ECO:0007669"/>
    <property type="project" value="UniProtKB-SubCell"/>
</dbReference>
<dbReference type="GO" id="GO:0003700">
    <property type="term" value="F:DNA-binding transcription factor activity"/>
    <property type="evidence" value="ECO:0007669"/>
    <property type="project" value="UniProtKB-UniRule"/>
</dbReference>
<dbReference type="GO" id="GO:0000976">
    <property type="term" value="F:transcription cis-regulatory region binding"/>
    <property type="evidence" value="ECO:0007669"/>
    <property type="project" value="TreeGrafter"/>
</dbReference>
<dbReference type="GO" id="GO:2000143">
    <property type="term" value="P:negative regulation of DNA-templated transcription initiation"/>
    <property type="evidence" value="ECO:0007669"/>
    <property type="project" value="TreeGrafter"/>
</dbReference>
<dbReference type="CDD" id="cd16321">
    <property type="entry name" value="MraZ_C"/>
    <property type="match status" value="1"/>
</dbReference>
<dbReference type="CDD" id="cd16320">
    <property type="entry name" value="MraZ_N"/>
    <property type="match status" value="1"/>
</dbReference>
<dbReference type="FunFam" id="3.40.1550.20:FF:000002">
    <property type="entry name" value="Transcriptional regulator MraZ"/>
    <property type="match status" value="1"/>
</dbReference>
<dbReference type="Gene3D" id="3.40.1550.20">
    <property type="entry name" value="Transcriptional regulator MraZ domain"/>
    <property type="match status" value="1"/>
</dbReference>
<dbReference type="HAMAP" id="MF_01008">
    <property type="entry name" value="MraZ"/>
    <property type="match status" value="1"/>
</dbReference>
<dbReference type="InterPro" id="IPR003444">
    <property type="entry name" value="MraZ"/>
</dbReference>
<dbReference type="InterPro" id="IPR035644">
    <property type="entry name" value="MraZ_C"/>
</dbReference>
<dbReference type="InterPro" id="IPR020603">
    <property type="entry name" value="MraZ_dom"/>
</dbReference>
<dbReference type="InterPro" id="IPR035642">
    <property type="entry name" value="MraZ_N"/>
</dbReference>
<dbReference type="InterPro" id="IPR038619">
    <property type="entry name" value="MraZ_sf"/>
</dbReference>
<dbReference type="InterPro" id="IPR007159">
    <property type="entry name" value="SpoVT-AbrB_dom"/>
</dbReference>
<dbReference type="InterPro" id="IPR037914">
    <property type="entry name" value="SpoVT-AbrB_sf"/>
</dbReference>
<dbReference type="NCBIfam" id="TIGR00242">
    <property type="entry name" value="division/cell wall cluster transcriptional repressor MraZ"/>
    <property type="match status" value="1"/>
</dbReference>
<dbReference type="PANTHER" id="PTHR34701">
    <property type="entry name" value="TRANSCRIPTIONAL REGULATOR MRAZ"/>
    <property type="match status" value="1"/>
</dbReference>
<dbReference type="PANTHER" id="PTHR34701:SF1">
    <property type="entry name" value="TRANSCRIPTIONAL REGULATOR MRAZ"/>
    <property type="match status" value="1"/>
</dbReference>
<dbReference type="Pfam" id="PF02381">
    <property type="entry name" value="MraZ"/>
    <property type="match status" value="2"/>
</dbReference>
<dbReference type="SUPFAM" id="SSF89447">
    <property type="entry name" value="AbrB/MazE/MraZ-like"/>
    <property type="match status" value="1"/>
</dbReference>
<dbReference type="PROSITE" id="PS51740">
    <property type="entry name" value="SPOVT_ABRB"/>
    <property type="match status" value="2"/>
</dbReference>
<reference key="1">
    <citation type="journal article" date="2004" name="Nucleic Acids Res.">
        <title>Whole genome comparisons of serotype 4b and 1/2a strains of the food-borne pathogen Listeria monocytogenes reveal new insights into the core genome components of this species.</title>
        <authorList>
            <person name="Nelson K.E."/>
            <person name="Fouts D.E."/>
            <person name="Mongodin E.F."/>
            <person name="Ravel J."/>
            <person name="DeBoy R.T."/>
            <person name="Kolonay J.F."/>
            <person name="Rasko D.A."/>
            <person name="Angiuoli S.V."/>
            <person name="Gill S.R."/>
            <person name="Paulsen I.T."/>
            <person name="Peterson J.D."/>
            <person name="White O."/>
            <person name="Nelson W.C."/>
            <person name="Nierman W.C."/>
            <person name="Beanan M.J."/>
            <person name="Brinkac L.M."/>
            <person name="Daugherty S.C."/>
            <person name="Dodson R.J."/>
            <person name="Durkin A.S."/>
            <person name="Madupu R."/>
            <person name="Haft D.H."/>
            <person name="Selengut J."/>
            <person name="Van Aken S.E."/>
            <person name="Khouri H.M."/>
            <person name="Fedorova N."/>
            <person name="Forberger H.A."/>
            <person name="Tran B."/>
            <person name="Kathariou S."/>
            <person name="Wonderling L.D."/>
            <person name="Uhlich G.A."/>
            <person name="Bayles D.O."/>
            <person name="Luchansky J.B."/>
            <person name="Fraser C.M."/>
        </authorList>
    </citation>
    <scope>NUCLEOTIDE SEQUENCE [LARGE SCALE GENOMIC DNA]</scope>
    <source>
        <strain>F2365</strain>
    </source>
</reference>
<name>MRAZ_LISMF</name>
<comment type="subunit">
    <text evidence="1">Forms oligomers.</text>
</comment>
<comment type="subcellular location">
    <subcellularLocation>
        <location evidence="1">Cytoplasm</location>
        <location evidence="1">Nucleoid</location>
    </subcellularLocation>
</comment>
<comment type="similarity">
    <text evidence="1">Belongs to the MraZ family.</text>
</comment>
<keyword id="KW-0963">Cytoplasm</keyword>
<keyword id="KW-0238">DNA-binding</keyword>
<keyword id="KW-0677">Repeat</keyword>
<keyword id="KW-0804">Transcription</keyword>
<keyword id="KW-0805">Transcription regulation</keyword>
<feature type="chain" id="PRO_0000108496" description="Transcriptional regulator MraZ">
    <location>
        <begin position="1"/>
        <end position="143"/>
    </location>
</feature>
<feature type="domain" description="SpoVT-AbrB 1" evidence="2">
    <location>
        <begin position="5"/>
        <end position="47"/>
    </location>
</feature>
<feature type="domain" description="SpoVT-AbrB 2" evidence="2">
    <location>
        <begin position="76"/>
        <end position="119"/>
    </location>
</feature>
<protein>
    <recommendedName>
        <fullName>Transcriptional regulator MraZ</fullName>
    </recommendedName>
</protein>
<proteinExistence type="inferred from homology"/>
<evidence type="ECO:0000255" key="1">
    <source>
        <dbReference type="HAMAP-Rule" id="MF_01008"/>
    </source>
</evidence>
<evidence type="ECO:0000255" key="2">
    <source>
        <dbReference type="PROSITE-ProRule" id="PRU01076"/>
    </source>
</evidence>
<organism>
    <name type="scientific">Listeria monocytogenes serotype 4b (strain F2365)</name>
    <dbReference type="NCBI Taxonomy" id="265669"/>
    <lineage>
        <taxon>Bacteria</taxon>
        <taxon>Bacillati</taxon>
        <taxon>Bacillota</taxon>
        <taxon>Bacilli</taxon>
        <taxon>Bacillales</taxon>
        <taxon>Listeriaceae</taxon>
        <taxon>Listeria</taxon>
    </lineage>
</organism>